<accession>Q5LTB0</accession>
<evidence type="ECO:0000255" key="1">
    <source>
        <dbReference type="HAMAP-Rule" id="MF_00656"/>
    </source>
</evidence>
<keyword id="KW-0884">PQQ biosynthesis</keyword>
<keyword id="KW-1185">Reference proteome</keyword>
<sequence>MAWTAPKLREVNCGMEINMYAPAEDEGGRGTDPIL</sequence>
<feature type="chain" id="PRO_0000220319" description="Coenzyme PQQ synthesis protein A">
    <location>
        <begin position="1"/>
        <end position="35"/>
    </location>
</feature>
<feature type="cross-link" description="Pyrroloquinoline quinone (Glu-Tyr)" evidence="1">
    <location>
        <begin position="16"/>
        <end position="20"/>
    </location>
</feature>
<name>PQQA_RUEPO</name>
<proteinExistence type="inferred from homology"/>
<organism>
    <name type="scientific">Ruegeria pomeroyi (strain ATCC 700808 / DSM 15171 / DSS-3)</name>
    <name type="common">Silicibacter pomeroyi</name>
    <dbReference type="NCBI Taxonomy" id="246200"/>
    <lineage>
        <taxon>Bacteria</taxon>
        <taxon>Pseudomonadati</taxon>
        <taxon>Pseudomonadota</taxon>
        <taxon>Alphaproteobacteria</taxon>
        <taxon>Rhodobacterales</taxon>
        <taxon>Roseobacteraceae</taxon>
        <taxon>Ruegeria</taxon>
    </lineage>
</organism>
<protein>
    <recommendedName>
        <fullName evidence="1">Coenzyme PQQ synthesis protein A</fullName>
    </recommendedName>
    <alternativeName>
        <fullName evidence="1">Pyrroloquinoline quinone biosynthesis protein A</fullName>
    </alternativeName>
</protein>
<dbReference type="EMBL" id="CP000031">
    <property type="protein sequence ID" value="AAV94791.1"/>
    <property type="molecule type" value="Genomic_DNA"/>
</dbReference>
<dbReference type="RefSeq" id="WP_011047241.1">
    <property type="nucleotide sequence ID" value="NC_003911.12"/>
</dbReference>
<dbReference type="STRING" id="246200.SPO1504"/>
<dbReference type="PaxDb" id="246200-SPO1504"/>
<dbReference type="KEGG" id="sil:SPO1504"/>
<dbReference type="eggNOG" id="ENOG5033IYR">
    <property type="taxonomic scope" value="Bacteria"/>
</dbReference>
<dbReference type="HOGENOM" id="CLU_219399_1_0_5"/>
<dbReference type="OrthoDB" id="8163745at2"/>
<dbReference type="UniPathway" id="UPA00539"/>
<dbReference type="Proteomes" id="UP000001023">
    <property type="component" value="Chromosome"/>
</dbReference>
<dbReference type="GO" id="GO:0018189">
    <property type="term" value="P:pyrroloquinoline quinone biosynthetic process"/>
    <property type="evidence" value="ECO:0007669"/>
    <property type="project" value="UniProtKB-UniRule"/>
</dbReference>
<dbReference type="HAMAP" id="MF_00656">
    <property type="entry name" value="PQQ_syn_PqqA"/>
    <property type="match status" value="1"/>
</dbReference>
<dbReference type="InterPro" id="IPR011725">
    <property type="entry name" value="PQQ_synth_PqqA"/>
</dbReference>
<dbReference type="NCBIfam" id="TIGR02107">
    <property type="entry name" value="PQQ_syn_pqqA"/>
    <property type="match status" value="1"/>
</dbReference>
<dbReference type="Pfam" id="PF08042">
    <property type="entry name" value="PqqA"/>
    <property type="match status" value="1"/>
</dbReference>
<reference key="1">
    <citation type="journal article" date="2004" name="Nature">
        <title>Genome sequence of Silicibacter pomeroyi reveals adaptations to the marine environment.</title>
        <authorList>
            <person name="Moran M.A."/>
            <person name="Buchan A."/>
            <person name="Gonzalez J.M."/>
            <person name="Heidelberg J.F."/>
            <person name="Whitman W.B."/>
            <person name="Kiene R.P."/>
            <person name="Henriksen J.R."/>
            <person name="King G.M."/>
            <person name="Belas R."/>
            <person name="Fuqua C."/>
            <person name="Brinkac L.M."/>
            <person name="Lewis M."/>
            <person name="Johri S."/>
            <person name="Weaver B."/>
            <person name="Pai G."/>
            <person name="Eisen J.A."/>
            <person name="Rahe E."/>
            <person name="Sheldon W.M."/>
            <person name="Ye W."/>
            <person name="Miller T.R."/>
            <person name="Carlton J."/>
            <person name="Rasko D.A."/>
            <person name="Paulsen I.T."/>
            <person name="Ren Q."/>
            <person name="Daugherty S.C."/>
            <person name="DeBoy R.T."/>
            <person name="Dodson R.J."/>
            <person name="Durkin A.S."/>
            <person name="Madupu R."/>
            <person name="Nelson W.C."/>
            <person name="Sullivan S.A."/>
            <person name="Rosovitz M.J."/>
            <person name="Haft D.H."/>
            <person name="Selengut J."/>
            <person name="Ward N."/>
        </authorList>
    </citation>
    <scope>NUCLEOTIDE SEQUENCE [LARGE SCALE GENOMIC DNA]</scope>
    <source>
        <strain>ATCC 700808 / DSM 15171 / DSS-3</strain>
    </source>
</reference>
<reference key="2">
    <citation type="journal article" date="2014" name="Stand. Genomic Sci.">
        <title>An updated genome annotation for the model marine bacterium Ruegeria pomeroyi DSS-3.</title>
        <authorList>
            <person name="Rivers A.R."/>
            <person name="Smith C.B."/>
            <person name="Moran M.A."/>
        </authorList>
    </citation>
    <scope>GENOME REANNOTATION</scope>
    <source>
        <strain>ATCC 700808 / DSM 15171 / DSS-3</strain>
    </source>
</reference>
<comment type="function">
    <text evidence="1">Required for coenzyme pyrroloquinoline quinone (PQQ) biosynthesis. PQQ is probably formed by cross-linking a specific glutamate to a specific tyrosine residue and excising these residues from the peptide.</text>
</comment>
<comment type="pathway">
    <text evidence="1">Cofactor biosynthesis; pyrroloquinoline quinone biosynthesis.</text>
</comment>
<comment type="similarity">
    <text evidence="1">Belongs to the PqqA family.</text>
</comment>
<gene>
    <name evidence="1" type="primary">pqqA</name>
    <name type="ordered locus">SPO1504</name>
</gene>